<evidence type="ECO:0000255" key="1">
    <source>
        <dbReference type="PROSITE-ProRule" id="PRU00441"/>
    </source>
</evidence>
<evidence type="ECO:0000305" key="2"/>
<protein>
    <recommendedName>
        <fullName>Putative ABC transporter permease protein ORF1</fullName>
    </recommendedName>
</protein>
<reference key="1">
    <citation type="journal article" date="1996" name="Appl. Microbiol. Biotechnol.">
        <title>Cloning, sequencing and overexpression in Escherichia coli of a xylanase gene, xynA from the thermophilic bacterium Rt8B.4 genus Caldicellulosiruptor.</title>
        <authorList>
            <person name="Dwivedi P.P."/>
            <person name="Gibbs M.D."/>
            <person name="Saul D.J."/>
            <person name="Bergquist P.L."/>
        </authorList>
    </citation>
    <scope>NUCLEOTIDE SEQUENCE [GENOMIC DNA]</scope>
</reference>
<proteinExistence type="inferred from homology"/>
<feature type="chain" id="PRO_0000060301" description="Putative ABC transporter permease protein ORF1">
    <location>
        <begin position="1" status="less than"/>
        <end position="140"/>
    </location>
</feature>
<feature type="transmembrane region" description="Helical" evidence="1">
    <location>
        <begin position="9"/>
        <end position="29"/>
    </location>
</feature>
<feature type="transmembrane region" description="Helical" evidence="1">
    <location>
        <begin position="65"/>
        <end position="85"/>
    </location>
</feature>
<feature type="transmembrane region" description="Helical" evidence="1">
    <location>
        <begin position="115"/>
        <end position="135"/>
    </location>
</feature>
<feature type="domain" description="ABC transmembrane type-1" evidence="1">
    <location>
        <begin position="1"/>
        <end position="133"/>
    </location>
</feature>
<feature type="non-terminal residue">
    <location>
        <position position="1"/>
    </location>
</feature>
<dbReference type="EMBL" id="L18965">
    <property type="protein sequence ID" value="AAB42041.1"/>
    <property type="molecule type" value="Genomic_DNA"/>
</dbReference>
<dbReference type="PIR" id="S41785">
    <property type="entry name" value="S41785"/>
</dbReference>
<dbReference type="SMR" id="P40979"/>
<dbReference type="GO" id="GO:0005886">
    <property type="term" value="C:plasma membrane"/>
    <property type="evidence" value="ECO:0007669"/>
    <property type="project" value="UniProtKB-SubCell"/>
</dbReference>
<dbReference type="GO" id="GO:0055085">
    <property type="term" value="P:transmembrane transport"/>
    <property type="evidence" value="ECO:0007669"/>
    <property type="project" value="InterPro"/>
</dbReference>
<dbReference type="CDD" id="cd06261">
    <property type="entry name" value="TM_PBP2"/>
    <property type="match status" value="1"/>
</dbReference>
<dbReference type="Gene3D" id="1.10.3720.10">
    <property type="entry name" value="MetI-like"/>
    <property type="match status" value="1"/>
</dbReference>
<dbReference type="InterPro" id="IPR051393">
    <property type="entry name" value="ABC_transporter_permease"/>
</dbReference>
<dbReference type="InterPro" id="IPR000515">
    <property type="entry name" value="MetI-like"/>
</dbReference>
<dbReference type="InterPro" id="IPR035906">
    <property type="entry name" value="MetI-like_sf"/>
</dbReference>
<dbReference type="PANTHER" id="PTHR30193">
    <property type="entry name" value="ABC TRANSPORTER PERMEASE PROTEIN"/>
    <property type="match status" value="1"/>
</dbReference>
<dbReference type="PANTHER" id="PTHR30193:SF37">
    <property type="entry name" value="INNER MEMBRANE ABC TRANSPORTER PERMEASE PROTEIN YCJO"/>
    <property type="match status" value="1"/>
</dbReference>
<dbReference type="Pfam" id="PF00528">
    <property type="entry name" value="BPD_transp_1"/>
    <property type="match status" value="1"/>
</dbReference>
<dbReference type="SUPFAM" id="SSF161098">
    <property type="entry name" value="MetI-like"/>
    <property type="match status" value="1"/>
</dbReference>
<dbReference type="PROSITE" id="PS50928">
    <property type="entry name" value="ABC_TM1"/>
    <property type="match status" value="1"/>
</dbReference>
<name>YOR1_CALSR</name>
<sequence length="140" mass="15761">DPNVAFYSVVAVICWQYIPFYMIFFIAALSNIPQELYEAAKIDGATQGQYFWRIELPLLTPSIKTACILSLIGSLKYFDLIYVMTEGGPSNATELMATYMYKNAFASFKMGYGSTIASAMFLIITTAGIFAYFVTRRKEE</sequence>
<organism>
    <name type="scientific">Caldicellulosiruptor sp. (strain Rt8B.4)</name>
    <dbReference type="NCBI Taxonomy" id="28238"/>
    <lineage>
        <taxon>Bacteria</taxon>
        <taxon>Bacillati</taxon>
        <taxon>Bacillota</taxon>
        <taxon>Bacillota incertae sedis</taxon>
        <taxon>Caldicellulosiruptorales</taxon>
        <taxon>Caldicellulosiruptoraceae</taxon>
        <taxon>Caldicellulosiruptor</taxon>
    </lineage>
</organism>
<accession>P40979</accession>
<keyword id="KW-1003">Cell membrane</keyword>
<keyword id="KW-0472">Membrane</keyword>
<keyword id="KW-0812">Transmembrane</keyword>
<keyword id="KW-1133">Transmembrane helix</keyword>
<keyword id="KW-0813">Transport</keyword>
<comment type="function">
    <text>May play a role in sugar transport.</text>
</comment>
<comment type="subcellular location">
    <subcellularLocation>
        <location evidence="2">Cell membrane</location>
        <topology evidence="1">Multi-pass membrane protein</topology>
    </subcellularLocation>
</comment>
<comment type="similarity">
    <text evidence="2">Belongs to the binding-protein-dependent transport system permease family. MalFG subfamily.</text>
</comment>